<comment type="function">
    <text evidence="6">Neurofilaments usually contain three intermediate filament proteins: NEFL, NEFM, and NEFH which are involved in the maintenance of neuronal caliber. May additionally cooperate with the neuronal intermediate filament proteins PRPH and INA to form neuronal filamentous networks (PubMed:22723690).</text>
</comment>
<comment type="subunit">
    <text evidence="3">Forms heterodimers with NEFL; which can further hetero-oligomerize (in vitro) (By similarity). Forms heterodimers with INA (in vitro) (By similarity).</text>
</comment>
<comment type="subcellular location">
    <subcellularLocation>
        <location evidence="6">Cytoplasm</location>
        <location evidence="6">Cytoskeleton</location>
    </subcellularLocation>
    <subcellularLocation>
        <location evidence="6">Cell projection</location>
        <location evidence="6">Axon</location>
    </subcellularLocation>
</comment>
<comment type="tissue specificity">
    <text evidence="6">Expressed in the sciatic nerve (at protein level).</text>
</comment>
<comment type="PTM">
    <text>There are a number of repeats of the tripeptide K-S-P, NFM is phosphorylated on a number of the serines in this motif. It is thought that phosphorylation of NFM results in the formation of interfilament cross bridges that are important in the maintenance of axonal caliber.</text>
</comment>
<comment type="PTM">
    <text>Phosphorylation seems to play a major role in the functioning of the larger neurofilament polypeptides (NF-M and NF-H), the levels of phosphorylation being altered developmentally and coincidentally with a change in the neurofilament function.</text>
</comment>
<comment type="PTM">
    <text evidence="1">Phosphorylated in the head and rod regions by the PKC kinase PKN1, leading to the inhibition of polymerization.</text>
</comment>
<comment type="similarity">
    <text evidence="4">Belongs to the intermediate filament family.</text>
</comment>
<accession>P08553</accession>
<accession>A2VCT5</accession>
<accession>Q0VDM8</accession>
<accession>Q3HRJ6</accession>
<accession>Q3TNS4</accession>
<accession>Q3TPK2</accession>
<accession>Q61961</accession>
<accession>Q8BQ20</accession>
<feature type="initiator methionine" description="Removed" evidence="2">
    <location>
        <position position="1"/>
    </location>
</feature>
<feature type="chain" id="PRO_0000063795" description="Neurofilament medium polypeptide">
    <location>
        <begin position="2"/>
        <end position="848"/>
    </location>
</feature>
<feature type="domain" description="IF rod" evidence="4">
    <location>
        <begin position="99"/>
        <end position="410"/>
    </location>
</feature>
<feature type="region of interest" description="Disordered" evidence="5">
    <location>
        <begin position="1"/>
        <end position="51"/>
    </location>
</feature>
<feature type="region of interest" description="Head">
    <location>
        <begin position="2"/>
        <end position="102"/>
    </location>
</feature>
<feature type="region of interest" description="Coil 1A">
    <location>
        <begin position="103"/>
        <end position="134"/>
    </location>
</feature>
<feature type="region of interest" description="Linker 1">
    <location>
        <begin position="135"/>
        <end position="147"/>
    </location>
</feature>
<feature type="region of interest" description="Coil 1B">
    <location>
        <begin position="148"/>
        <end position="246"/>
    </location>
</feature>
<feature type="region of interest" description="Linker 12">
    <location>
        <begin position="247"/>
        <end position="263"/>
    </location>
</feature>
<feature type="region of interest" description="Coil 2A">
    <location>
        <begin position="264"/>
        <end position="285"/>
    </location>
</feature>
<feature type="region of interest" description="Linker 2">
    <location>
        <begin position="286"/>
        <end position="289"/>
    </location>
</feature>
<feature type="region of interest" description="Coil 2B">
    <location>
        <begin position="290"/>
        <end position="410"/>
    </location>
</feature>
<feature type="region of interest" description="Tail">
    <location>
        <begin position="411"/>
        <end position="848"/>
    </location>
</feature>
<feature type="region of interest" description="Disordered" evidence="5">
    <location>
        <begin position="482"/>
        <end position="785"/>
    </location>
</feature>
<feature type="compositionally biased region" description="Polar residues" evidence="5">
    <location>
        <begin position="1"/>
        <end position="10"/>
    </location>
</feature>
<feature type="compositionally biased region" description="Low complexity" evidence="5">
    <location>
        <begin position="21"/>
        <end position="44"/>
    </location>
</feature>
<feature type="compositionally biased region" description="Acidic residues" evidence="5">
    <location>
        <begin position="488"/>
        <end position="498"/>
    </location>
</feature>
<feature type="compositionally biased region" description="Basic and acidic residues" evidence="5">
    <location>
        <begin position="499"/>
        <end position="509"/>
    </location>
</feature>
<feature type="compositionally biased region" description="Acidic residues" evidence="5">
    <location>
        <begin position="510"/>
        <end position="533"/>
    </location>
</feature>
<feature type="compositionally biased region" description="Basic and acidic residues" evidence="5">
    <location>
        <begin position="534"/>
        <end position="553"/>
    </location>
</feature>
<feature type="compositionally biased region" description="Acidic residues" evidence="5">
    <location>
        <begin position="554"/>
        <end position="576"/>
    </location>
</feature>
<feature type="compositionally biased region" description="Basic and acidic residues" evidence="5">
    <location>
        <begin position="577"/>
        <end position="604"/>
    </location>
</feature>
<feature type="compositionally biased region" description="Basic and acidic residues" evidence="5">
    <location>
        <begin position="611"/>
        <end position="677"/>
    </location>
</feature>
<feature type="compositionally biased region" description="Basic and acidic residues" evidence="5">
    <location>
        <begin position="689"/>
        <end position="711"/>
    </location>
</feature>
<feature type="compositionally biased region" description="Basic and acidic residues" evidence="5">
    <location>
        <begin position="720"/>
        <end position="732"/>
    </location>
</feature>
<feature type="compositionally biased region" description="Basic and acidic residues" evidence="5">
    <location>
        <begin position="748"/>
        <end position="760"/>
    </location>
</feature>
<feature type="compositionally biased region" description="Basic and acidic residues" evidence="5">
    <location>
        <begin position="771"/>
        <end position="785"/>
    </location>
</feature>
<feature type="modified residue" description="N-acetylserine" evidence="2">
    <location>
        <position position="2"/>
    </location>
</feature>
<feature type="modified residue" description="Phosphoserine" evidence="3">
    <location>
        <position position="30"/>
    </location>
</feature>
<feature type="modified residue" description="Omega-N-methylarginine" evidence="13">
    <location>
        <position position="42"/>
    </location>
</feature>
<feature type="modified residue" description="Phosphoserine" evidence="12">
    <location>
        <position position="97"/>
    </location>
</feature>
<feature type="modified residue" description="Phosphoserine" evidence="12">
    <location>
        <position position="224"/>
    </location>
</feature>
<feature type="modified residue" description="Phosphotyrosine" evidence="11">
    <location>
        <position position="318"/>
    </location>
</feature>
<feature type="modified residue" description="Phosphoserine" evidence="3">
    <location>
        <position position="344"/>
    </location>
</feature>
<feature type="modified residue" description="Phosphoserine" evidence="3">
    <location>
        <position position="416"/>
    </location>
</feature>
<feature type="modified residue" description="Phosphoserine" evidence="3">
    <location>
        <position position="428"/>
    </location>
</feature>
<feature type="modified residue" description="Phosphoserine" evidence="3">
    <location>
        <position position="466"/>
    </location>
</feature>
<feature type="modified residue" description="Phosphoserine" evidence="3">
    <location>
        <position position="482"/>
    </location>
</feature>
<feature type="modified residue" description="Phosphoserine" evidence="2">
    <location>
        <position position="502"/>
    </location>
</feature>
<feature type="modified residue" description="Phosphoserine" evidence="3">
    <location>
        <position position="506"/>
    </location>
</feature>
<feature type="modified residue" description="Phosphoserine" evidence="2">
    <location>
        <position position="537"/>
    </location>
</feature>
<feature type="modified residue" description="Phosphoserine" evidence="2">
    <location>
        <position position="545"/>
    </location>
</feature>
<feature type="modified residue" description="Phosphoserine" evidence="12">
    <location>
        <position position="550"/>
    </location>
</feature>
<feature type="modified residue" description="Phosphoserine" evidence="12">
    <location>
        <position position="551"/>
    </location>
</feature>
<feature type="modified residue" description="Phosphothreonine" evidence="12">
    <location>
        <position position="565"/>
    </location>
</feature>
<feature type="modified residue" description="Phosphoserine" evidence="12">
    <location>
        <position position="605"/>
    </location>
</feature>
<feature type="modified residue" description="Phosphoserine" evidence="10 12">
    <location>
        <position position="610"/>
    </location>
</feature>
<feature type="modified residue" description="Phosphothreonine" evidence="10">
    <location>
        <position position="642"/>
    </location>
</feature>
<feature type="modified residue" description="Phosphoserine" evidence="2">
    <location>
        <position position="645"/>
    </location>
</feature>
<feature type="modified residue" description="Phosphoserine" evidence="10">
    <location>
        <position position="669"/>
    </location>
</feature>
<feature type="modified residue" description="Phosphoserine" evidence="2">
    <location>
        <position position="689"/>
    </location>
</feature>
<feature type="modified residue" description="Phosphoserine" evidence="10 12">
    <location>
        <position position="715"/>
    </location>
</feature>
<feature type="modified residue" description="Phosphoserine" evidence="12">
    <location>
        <position position="723"/>
    </location>
</feature>
<feature type="modified residue" description="Phosphoserine" evidence="3">
    <location>
        <position position="753"/>
    </location>
</feature>
<feature type="modified residue" description="Phosphoserine" evidence="9 12">
    <location>
        <position position="769"/>
    </location>
</feature>
<feature type="glycosylation site" description="O-linked (GlcNAc) threonine" evidence="8">
    <location>
        <position position="47"/>
    </location>
</feature>
<feature type="glycosylation site" description="O-linked (GlcNAc) threonine" evidence="8">
    <location>
        <position position="430"/>
    </location>
</feature>
<feature type="sequence conflict" description="In Ref. 1; CAA29127." evidence="7" ref="1">
    <original>V</original>
    <variation>VP</variation>
    <location>
        <position position="17"/>
    </location>
</feature>
<feature type="sequence conflict" description="In Ref. 1; CAA29127." evidence="7" ref="1">
    <original>K</original>
    <variation>T</variation>
    <location>
        <position position="53"/>
    </location>
</feature>
<feature type="sequence conflict" description="In Ref. 1; CAA29127." evidence="7" ref="1">
    <original>L</original>
    <variation>V</variation>
    <location>
        <position position="57"/>
    </location>
</feature>
<feature type="sequence conflict" description="In Ref. 1; CAA29127." evidence="7" ref="1">
    <original>S</original>
    <variation>R</variation>
    <location>
        <position position="234"/>
    </location>
</feature>
<feature type="sequence conflict" description="In Ref. 6; AAA39815." evidence="7" ref="6">
    <original>S</original>
    <variation>F</variation>
    <location>
        <position position="432"/>
    </location>
</feature>
<feature type="sequence conflict" description="In Ref. 6; AAA39815." evidence="7" ref="6">
    <original>QA</original>
    <variation>RR</variation>
    <location>
        <begin position="539"/>
        <end position="540"/>
    </location>
</feature>
<feature type="sequence conflict" description="In Ref. 2; ABA46749 and 3; BAC34724/BAE37734." evidence="7" ref="2 3">
    <original>Q</original>
    <variation>H</variation>
    <location>
        <position position="628"/>
    </location>
</feature>
<feature type="sequence conflict" description="In Ref. 3; BAC34724." evidence="7" ref="3">
    <original>E</original>
    <variation>K</variation>
    <location>
        <position position="696"/>
    </location>
</feature>
<feature type="sequence conflict" description="In Ref. 2; ABA46749 and 3; BAC34724." evidence="7" ref="2 3">
    <original>P</original>
    <variation>L</variation>
    <location>
        <position position="699"/>
    </location>
</feature>
<protein>
    <recommendedName>
        <fullName>Neurofilament medium polypeptide</fullName>
        <shortName>NF-M</shortName>
    </recommendedName>
    <alternativeName>
        <fullName>160 kDa neurofilament protein</fullName>
    </alternativeName>
    <alternativeName>
        <fullName>Neurofilament 3</fullName>
    </alternativeName>
    <alternativeName>
        <fullName>Neurofilament triplet M protein</fullName>
    </alternativeName>
</protein>
<dbReference type="EMBL" id="X05640">
    <property type="protein sequence ID" value="CAA29127.1"/>
    <property type="molecule type" value="Genomic_DNA"/>
</dbReference>
<dbReference type="EMBL" id="DQ201636">
    <property type="protein sequence ID" value="ABA46749.1"/>
    <property type="molecule type" value="mRNA"/>
</dbReference>
<dbReference type="EMBL" id="AK051696">
    <property type="protein sequence ID" value="BAC34724.1"/>
    <property type="molecule type" value="mRNA"/>
</dbReference>
<dbReference type="EMBL" id="AK164318">
    <property type="protein sequence ID" value="BAE37734.1"/>
    <property type="molecule type" value="mRNA"/>
</dbReference>
<dbReference type="EMBL" id="AK165041">
    <property type="protein sequence ID" value="BAE38014.1"/>
    <property type="molecule type" value="mRNA"/>
</dbReference>
<dbReference type="EMBL" id="BC119602">
    <property type="protein sequence ID" value="AAI19603.1"/>
    <property type="molecule type" value="mRNA"/>
</dbReference>
<dbReference type="EMBL" id="BC128564">
    <property type="protein sequence ID" value="AAI28565.1"/>
    <property type="molecule type" value="mRNA"/>
</dbReference>
<dbReference type="EMBL" id="M20481">
    <property type="protein sequence ID" value="AAA39815.1"/>
    <property type="molecule type" value="mRNA"/>
</dbReference>
<dbReference type="CCDS" id="CCDS27233.1"/>
<dbReference type="PIR" id="B43772">
    <property type="entry name" value="B43772"/>
</dbReference>
<dbReference type="PIR" id="S00030">
    <property type="entry name" value="S00030"/>
</dbReference>
<dbReference type="RefSeq" id="NP_032717.2">
    <property type="nucleotide sequence ID" value="NM_008691.2"/>
</dbReference>
<dbReference type="SMR" id="P08553"/>
<dbReference type="BioGRID" id="201758">
    <property type="interactions" value="23"/>
</dbReference>
<dbReference type="FunCoup" id="P08553">
    <property type="interactions" value="221"/>
</dbReference>
<dbReference type="IntAct" id="P08553">
    <property type="interactions" value="13"/>
</dbReference>
<dbReference type="MINT" id="P08553"/>
<dbReference type="STRING" id="10090.ENSMUSP00000022638"/>
<dbReference type="GlyCosmos" id="P08553">
    <property type="glycosylation" value="2 sites, No reported glycans"/>
</dbReference>
<dbReference type="GlyGen" id="P08553">
    <property type="glycosylation" value="12 sites, 1 O-linked glycan (12 sites)"/>
</dbReference>
<dbReference type="iPTMnet" id="P08553"/>
<dbReference type="PhosphoSitePlus" id="P08553"/>
<dbReference type="SwissPalm" id="P08553"/>
<dbReference type="jPOST" id="P08553"/>
<dbReference type="PaxDb" id="10090-ENSMUSP00000022638"/>
<dbReference type="PeptideAtlas" id="P08553"/>
<dbReference type="ProteomicsDB" id="252818"/>
<dbReference type="DNASU" id="18040"/>
<dbReference type="GeneID" id="18040"/>
<dbReference type="KEGG" id="mmu:18040"/>
<dbReference type="UCSC" id="uc007ulo.1">
    <property type="organism name" value="mouse"/>
</dbReference>
<dbReference type="AGR" id="MGI:97314"/>
<dbReference type="CTD" id="4741"/>
<dbReference type="MGI" id="MGI:97314">
    <property type="gene designation" value="Nefm"/>
</dbReference>
<dbReference type="eggNOG" id="KOG1216">
    <property type="taxonomic scope" value="Eukaryota"/>
</dbReference>
<dbReference type="InParanoid" id="P08553"/>
<dbReference type="OrthoDB" id="2441647at2759"/>
<dbReference type="PhylomeDB" id="P08553"/>
<dbReference type="TreeFam" id="TF330122"/>
<dbReference type="BioGRID-ORCS" id="18040">
    <property type="hits" value="1 hit in 75 CRISPR screens"/>
</dbReference>
<dbReference type="CD-CODE" id="CE726F99">
    <property type="entry name" value="Postsynaptic density"/>
</dbReference>
<dbReference type="ChiTaRS" id="Nefm">
    <property type="organism name" value="mouse"/>
</dbReference>
<dbReference type="PRO" id="PR:P08553"/>
<dbReference type="Proteomes" id="UP000000589">
    <property type="component" value="Unplaced"/>
</dbReference>
<dbReference type="RNAct" id="P08553">
    <property type="molecule type" value="protein"/>
</dbReference>
<dbReference type="GO" id="GO:0030424">
    <property type="term" value="C:axon"/>
    <property type="evidence" value="ECO:0000314"/>
    <property type="project" value="MGI"/>
</dbReference>
<dbReference type="GO" id="GO:0043209">
    <property type="term" value="C:myelin sheath"/>
    <property type="evidence" value="ECO:0007005"/>
    <property type="project" value="UniProtKB"/>
</dbReference>
<dbReference type="GO" id="GO:0005883">
    <property type="term" value="C:neurofilament"/>
    <property type="evidence" value="ECO:0000314"/>
    <property type="project" value="MGI"/>
</dbReference>
<dbReference type="GO" id="GO:0031594">
    <property type="term" value="C:neuromuscular junction"/>
    <property type="evidence" value="ECO:0000314"/>
    <property type="project" value="MGI"/>
</dbReference>
<dbReference type="GO" id="GO:0043005">
    <property type="term" value="C:neuron projection"/>
    <property type="evidence" value="ECO:0000314"/>
    <property type="project" value="MGI"/>
</dbReference>
<dbReference type="GO" id="GO:0014069">
    <property type="term" value="C:postsynaptic density"/>
    <property type="evidence" value="ECO:0000314"/>
    <property type="project" value="MGI"/>
</dbReference>
<dbReference type="GO" id="GO:0099160">
    <property type="term" value="C:postsynaptic intermediate filament cytoskeleton"/>
    <property type="evidence" value="ECO:0000314"/>
    <property type="project" value="SynGO"/>
</dbReference>
<dbReference type="GO" id="GO:0099182">
    <property type="term" value="C:presynaptic intermediate filament cytoskeleton"/>
    <property type="evidence" value="ECO:0000314"/>
    <property type="project" value="SynGO"/>
</dbReference>
<dbReference type="GO" id="GO:0005198">
    <property type="term" value="F:structural molecule activity"/>
    <property type="evidence" value="ECO:0007669"/>
    <property type="project" value="InterPro"/>
</dbReference>
<dbReference type="GO" id="GO:0008088">
    <property type="term" value="P:axo-dendritic transport"/>
    <property type="evidence" value="ECO:0000315"/>
    <property type="project" value="MGI"/>
</dbReference>
<dbReference type="GO" id="GO:0045110">
    <property type="term" value="P:intermediate filament bundle assembly"/>
    <property type="evidence" value="ECO:0000316"/>
    <property type="project" value="MGI"/>
</dbReference>
<dbReference type="GO" id="GO:0045104">
    <property type="term" value="P:intermediate filament cytoskeleton organization"/>
    <property type="evidence" value="ECO:0000315"/>
    <property type="project" value="MGI"/>
</dbReference>
<dbReference type="GO" id="GO:0000226">
    <property type="term" value="P:microtubule cytoskeleton organization"/>
    <property type="evidence" value="ECO:0000316"/>
    <property type="project" value="MGI"/>
</dbReference>
<dbReference type="GO" id="GO:0060052">
    <property type="term" value="P:neurofilament cytoskeleton organization"/>
    <property type="evidence" value="ECO:0000315"/>
    <property type="project" value="MGI"/>
</dbReference>
<dbReference type="GO" id="GO:0031133">
    <property type="term" value="P:regulation of axon diameter"/>
    <property type="evidence" value="ECO:0000315"/>
    <property type="project" value="MGI"/>
</dbReference>
<dbReference type="FunFam" id="1.20.5.1160:FF:000001">
    <property type="entry name" value="Keratin type II"/>
    <property type="match status" value="1"/>
</dbReference>
<dbReference type="FunFam" id="1.20.5.170:FF:000002">
    <property type="entry name" value="Type I keratin KA11"/>
    <property type="match status" value="1"/>
</dbReference>
<dbReference type="FunFam" id="1.20.5.500:FF:000001">
    <property type="entry name" value="Type II keratin 23"/>
    <property type="match status" value="1"/>
</dbReference>
<dbReference type="Gene3D" id="1.20.5.170">
    <property type="match status" value="1"/>
</dbReference>
<dbReference type="Gene3D" id="1.20.5.500">
    <property type="entry name" value="Single helix bin"/>
    <property type="match status" value="1"/>
</dbReference>
<dbReference type="Gene3D" id="1.20.5.1160">
    <property type="entry name" value="Vasodilator-stimulated phosphoprotein"/>
    <property type="match status" value="1"/>
</dbReference>
<dbReference type="InterPro" id="IPR018039">
    <property type="entry name" value="IF_conserved"/>
</dbReference>
<dbReference type="InterPro" id="IPR039008">
    <property type="entry name" value="IF_rod_dom"/>
</dbReference>
<dbReference type="InterPro" id="IPR006821">
    <property type="entry name" value="Intermed_filament_DNA-bd"/>
</dbReference>
<dbReference type="InterPro" id="IPR050405">
    <property type="entry name" value="Intermediate_filament"/>
</dbReference>
<dbReference type="InterPro" id="IPR002957">
    <property type="entry name" value="Keratin_I"/>
</dbReference>
<dbReference type="PANTHER" id="PTHR45652">
    <property type="entry name" value="GLIAL FIBRILLARY ACIDIC PROTEIN"/>
    <property type="match status" value="1"/>
</dbReference>
<dbReference type="PANTHER" id="PTHR45652:SF3">
    <property type="entry name" value="NEUROFILAMENT MEDIUM POLYPEPTIDE"/>
    <property type="match status" value="1"/>
</dbReference>
<dbReference type="Pfam" id="PF00038">
    <property type="entry name" value="Filament"/>
    <property type="match status" value="1"/>
</dbReference>
<dbReference type="Pfam" id="PF04732">
    <property type="entry name" value="Filament_head"/>
    <property type="match status" value="1"/>
</dbReference>
<dbReference type="PRINTS" id="PR01248">
    <property type="entry name" value="TYPE1KERATIN"/>
</dbReference>
<dbReference type="SMART" id="SM01391">
    <property type="entry name" value="Filament"/>
    <property type="match status" value="1"/>
</dbReference>
<dbReference type="SUPFAM" id="SSF64593">
    <property type="entry name" value="Intermediate filament protein, coiled coil region"/>
    <property type="match status" value="2"/>
</dbReference>
<dbReference type="PROSITE" id="PS00226">
    <property type="entry name" value="IF_ROD_1"/>
    <property type="match status" value="1"/>
</dbReference>
<dbReference type="PROSITE" id="PS51842">
    <property type="entry name" value="IF_ROD_2"/>
    <property type="match status" value="1"/>
</dbReference>
<reference key="1">
    <citation type="journal article" date="1987" name="Eur. J. Biochem.">
        <title>Structure and evolutionary origin of the gene encoding mouse NF-M, the middle-molecular-mass neurofilament protein.</title>
        <authorList>
            <person name="Levy E."/>
            <person name="Liem R.K.H."/>
            <person name="D'Eustachio P."/>
            <person name="Cowan N.J."/>
        </authorList>
    </citation>
    <scope>NUCLEOTIDE SEQUENCE [GENOMIC DNA]</scope>
</reference>
<reference key="2">
    <citation type="submission" date="2005-09" db="EMBL/GenBank/DDBJ databases">
        <authorList>
            <person name="Jensen K.H."/>
            <person name="Brown A."/>
        </authorList>
    </citation>
    <scope>NUCLEOTIDE SEQUENCE [MRNA]</scope>
    <source>
        <tissue>Cerebellum</tissue>
    </source>
</reference>
<reference key="3">
    <citation type="journal article" date="2005" name="Science">
        <title>The transcriptional landscape of the mammalian genome.</title>
        <authorList>
            <person name="Carninci P."/>
            <person name="Kasukawa T."/>
            <person name="Katayama S."/>
            <person name="Gough J."/>
            <person name="Frith M.C."/>
            <person name="Maeda N."/>
            <person name="Oyama R."/>
            <person name="Ravasi T."/>
            <person name="Lenhard B."/>
            <person name="Wells C."/>
            <person name="Kodzius R."/>
            <person name="Shimokawa K."/>
            <person name="Bajic V.B."/>
            <person name="Brenner S.E."/>
            <person name="Batalov S."/>
            <person name="Forrest A.R."/>
            <person name="Zavolan M."/>
            <person name="Davis M.J."/>
            <person name="Wilming L.G."/>
            <person name="Aidinis V."/>
            <person name="Allen J.E."/>
            <person name="Ambesi-Impiombato A."/>
            <person name="Apweiler R."/>
            <person name="Aturaliya R.N."/>
            <person name="Bailey T.L."/>
            <person name="Bansal M."/>
            <person name="Baxter L."/>
            <person name="Beisel K.W."/>
            <person name="Bersano T."/>
            <person name="Bono H."/>
            <person name="Chalk A.M."/>
            <person name="Chiu K.P."/>
            <person name="Choudhary V."/>
            <person name="Christoffels A."/>
            <person name="Clutterbuck D.R."/>
            <person name="Crowe M.L."/>
            <person name="Dalla E."/>
            <person name="Dalrymple B.P."/>
            <person name="de Bono B."/>
            <person name="Della Gatta G."/>
            <person name="di Bernardo D."/>
            <person name="Down T."/>
            <person name="Engstrom P."/>
            <person name="Fagiolini M."/>
            <person name="Faulkner G."/>
            <person name="Fletcher C.F."/>
            <person name="Fukushima T."/>
            <person name="Furuno M."/>
            <person name="Futaki S."/>
            <person name="Gariboldi M."/>
            <person name="Georgii-Hemming P."/>
            <person name="Gingeras T.R."/>
            <person name="Gojobori T."/>
            <person name="Green R.E."/>
            <person name="Gustincich S."/>
            <person name="Harbers M."/>
            <person name="Hayashi Y."/>
            <person name="Hensch T.K."/>
            <person name="Hirokawa N."/>
            <person name="Hill D."/>
            <person name="Huminiecki L."/>
            <person name="Iacono M."/>
            <person name="Ikeo K."/>
            <person name="Iwama A."/>
            <person name="Ishikawa T."/>
            <person name="Jakt M."/>
            <person name="Kanapin A."/>
            <person name="Katoh M."/>
            <person name="Kawasawa Y."/>
            <person name="Kelso J."/>
            <person name="Kitamura H."/>
            <person name="Kitano H."/>
            <person name="Kollias G."/>
            <person name="Krishnan S.P."/>
            <person name="Kruger A."/>
            <person name="Kummerfeld S.K."/>
            <person name="Kurochkin I.V."/>
            <person name="Lareau L.F."/>
            <person name="Lazarevic D."/>
            <person name="Lipovich L."/>
            <person name="Liu J."/>
            <person name="Liuni S."/>
            <person name="McWilliam S."/>
            <person name="Madan Babu M."/>
            <person name="Madera M."/>
            <person name="Marchionni L."/>
            <person name="Matsuda H."/>
            <person name="Matsuzawa S."/>
            <person name="Miki H."/>
            <person name="Mignone F."/>
            <person name="Miyake S."/>
            <person name="Morris K."/>
            <person name="Mottagui-Tabar S."/>
            <person name="Mulder N."/>
            <person name="Nakano N."/>
            <person name="Nakauchi H."/>
            <person name="Ng P."/>
            <person name="Nilsson R."/>
            <person name="Nishiguchi S."/>
            <person name="Nishikawa S."/>
            <person name="Nori F."/>
            <person name="Ohara O."/>
            <person name="Okazaki Y."/>
            <person name="Orlando V."/>
            <person name="Pang K.C."/>
            <person name="Pavan W.J."/>
            <person name="Pavesi G."/>
            <person name="Pesole G."/>
            <person name="Petrovsky N."/>
            <person name="Piazza S."/>
            <person name="Reed J."/>
            <person name="Reid J.F."/>
            <person name="Ring B.Z."/>
            <person name="Ringwald M."/>
            <person name="Rost B."/>
            <person name="Ruan Y."/>
            <person name="Salzberg S.L."/>
            <person name="Sandelin A."/>
            <person name="Schneider C."/>
            <person name="Schoenbach C."/>
            <person name="Sekiguchi K."/>
            <person name="Semple C.A."/>
            <person name="Seno S."/>
            <person name="Sessa L."/>
            <person name="Sheng Y."/>
            <person name="Shibata Y."/>
            <person name="Shimada H."/>
            <person name="Shimada K."/>
            <person name="Silva D."/>
            <person name="Sinclair B."/>
            <person name="Sperling S."/>
            <person name="Stupka E."/>
            <person name="Sugiura K."/>
            <person name="Sultana R."/>
            <person name="Takenaka Y."/>
            <person name="Taki K."/>
            <person name="Tammoja K."/>
            <person name="Tan S.L."/>
            <person name="Tang S."/>
            <person name="Taylor M.S."/>
            <person name="Tegner J."/>
            <person name="Teichmann S.A."/>
            <person name="Ueda H.R."/>
            <person name="van Nimwegen E."/>
            <person name="Verardo R."/>
            <person name="Wei C.L."/>
            <person name="Yagi K."/>
            <person name="Yamanishi H."/>
            <person name="Zabarovsky E."/>
            <person name="Zhu S."/>
            <person name="Zimmer A."/>
            <person name="Hide W."/>
            <person name="Bult C."/>
            <person name="Grimmond S.M."/>
            <person name="Teasdale R.D."/>
            <person name="Liu E.T."/>
            <person name="Brusic V."/>
            <person name="Quackenbush J."/>
            <person name="Wahlestedt C."/>
            <person name="Mattick J.S."/>
            <person name="Hume D.A."/>
            <person name="Kai C."/>
            <person name="Sasaki D."/>
            <person name="Tomaru Y."/>
            <person name="Fukuda S."/>
            <person name="Kanamori-Katayama M."/>
            <person name="Suzuki M."/>
            <person name="Aoki J."/>
            <person name="Arakawa T."/>
            <person name="Iida J."/>
            <person name="Imamura K."/>
            <person name="Itoh M."/>
            <person name="Kato T."/>
            <person name="Kawaji H."/>
            <person name="Kawagashira N."/>
            <person name="Kawashima T."/>
            <person name="Kojima M."/>
            <person name="Kondo S."/>
            <person name="Konno H."/>
            <person name="Nakano K."/>
            <person name="Ninomiya N."/>
            <person name="Nishio T."/>
            <person name="Okada M."/>
            <person name="Plessy C."/>
            <person name="Shibata K."/>
            <person name="Shiraki T."/>
            <person name="Suzuki S."/>
            <person name="Tagami M."/>
            <person name="Waki K."/>
            <person name="Watahiki A."/>
            <person name="Okamura-Oho Y."/>
            <person name="Suzuki H."/>
            <person name="Kawai J."/>
            <person name="Hayashizaki Y."/>
        </authorList>
    </citation>
    <scope>NUCLEOTIDE SEQUENCE [LARGE SCALE MRNA]</scope>
    <source>
        <strain>C57BL/6J</strain>
        <tissue>Eye</tissue>
        <tissue>Spinal ganglion</tissue>
    </source>
</reference>
<reference key="4">
    <citation type="journal article" date="2004" name="Genome Res.">
        <title>The status, quality, and expansion of the NIH full-length cDNA project: the Mammalian Gene Collection (MGC).</title>
        <authorList>
            <consortium name="The MGC Project Team"/>
        </authorList>
    </citation>
    <scope>NUCLEOTIDE SEQUENCE [LARGE SCALE MRNA] OF 2-848</scope>
</reference>
<reference key="5">
    <citation type="submission" date="2007-03" db="UniProtKB">
        <authorList>
            <person name="Lubec G."/>
            <person name="Klug S."/>
        </authorList>
    </citation>
    <scope>PROTEIN SEQUENCE OF 167-182; 222-233 AND 410-425</scope>
    <scope>IDENTIFICATION BY MASS SPECTROMETRY</scope>
    <source>
        <tissue>Hippocampus</tissue>
    </source>
</reference>
<reference key="6">
    <citation type="journal article" date="1986" name="Brain Res.">
        <title>Cloning and developmental expression of the murine neurofilament gene family.</title>
        <authorList>
            <person name="Julien J.-P."/>
            <person name="Meyer D."/>
            <person name="Flavell D."/>
            <person name="Hurst J."/>
            <person name="Grosveld F."/>
        </authorList>
    </citation>
    <scope>NUCLEOTIDE SEQUENCE [MRNA] OF 322-540</scope>
</reference>
<reference key="7">
    <citation type="journal article" date="2004" name="Mol. Cell. Proteomics">
        <title>Phosphoproteomic analysis of the developing mouse brain.</title>
        <authorList>
            <person name="Ballif B.A."/>
            <person name="Villen J."/>
            <person name="Beausoleil S.A."/>
            <person name="Schwartz D."/>
            <person name="Gygi S.P."/>
        </authorList>
    </citation>
    <scope>PHOSPHORYLATION [LARGE SCALE ANALYSIS] AT SER-769</scope>
    <scope>IDENTIFICATION BY MASS SPECTROMETRY [LARGE SCALE ANALYSIS]</scope>
    <source>
        <tissue>Embryonic brain</tissue>
    </source>
</reference>
<reference key="8">
    <citation type="journal article" date="2006" name="Mol. Cell. Proteomics">
        <title>Comprehensive identification of phosphorylation sites in postsynaptic density preparations.</title>
        <authorList>
            <person name="Trinidad J.C."/>
            <person name="Specht C.G."/>
            <person name="Thalhammer A."/>
            <person name="Schoepfer R."/>
            <person name="Burlingame A.L."/>
        </authorList>
    </citation>
    <scope>PHOSPHORYLATION [LARGE SCALE ANALYSIS] AT SER-610; THR-642; SER-669 AND SER-715</scope>
    <scope>IDENTIFICATION BY MASS SPECTROMETRY [LARGE SCALE ANALYSIS]</scope>
    <source>
        <tissue>Brain</tissue>
    </source>
</reference>
<reference key="9">
    <citation type="journal article" date="2006" name="Mol. Cell. Proteomics">
        <title>O-linked N-acetylglucosamine proteomics of postsynaptic density preparations using lectin weak affinity chromatography and mass spectrometry.</title>
        <authorList>
            <person name="Vosseller K."/>
            <person name="Trinidad J.C."/>
            <person name="Chalkley R.J."/>
            <person name="Specht C.G."/>
            <person name="Thalhammer A."/>
            <person name="Lynn A.J."/>
            <person name="Snedecor J.O."/>
            <person name="Guan S."/>
            <person name="Medzihradszky K.F."/>
            <person name="Maltby D.A."/>
            <person name="Schoepfer R."/>
            <person name="Burlingame A.L."/>
        </authorList>
    </citation>
    <scope>GLYCOSYLATION [LARGE SCALE ANALYSIS] AT THR-47 AND THR-430</scope>
    <source>
        <tissue>Brain</tissue>
    </source>
</reference>
<reference key="10">
    <citation type="journal article" date="2007" name="Mol. Cell. Proteomics">
        <title>Qualitative and quantitative analyses of protein phosphorylation in naive and stimulated mouse synaptosomal preparations.</title>
        <authorList>
            <person name="Munton R.P."/>
            <person name="Tweedie-Cullen R."/>
            <person name="Livingstone-Zatchej M."/>
            <person name="Weinandy F."/>
            <person name="Waidelich M."/>
            <person name="Longo D."/>
            <person name="Gehrig P."/>
            <person name="Potthast F."/>
            <person name="Rutishauser D."/>
            <person name="Gerrits B."/>
            <person name="Panse C."/>
            <person name="Schlapbach R."/>
            <person name="Mansuy I.M."/>
        </authorList>
    </citation>
    <scope>IDENTIFICATION BY MASS SPECTROMETRY [LARGE SCALE ANALYSIS]</scope>
    <source>
        <tissue>Brain cortex</tissue>
    </source>
</reference>
<reference key="11">
    <citation type="journal article" date="2008" name="J. Proteome Res.">
        <title>Large-scale identification and evolution indexing of tyrosine phosphorylation sites from murine brain.</title>
        <authorList>
            <person name="Ballif B.A."/>
            <person name="Carey G.R."/>
            <person name="Sunyaev S.R."/>
            <person name="Gygi S.P."/>
        </authorList>
    </citation>
    <scope>PHOSPHORYLATION [LARGE SCALE ANALYSIS] AT TYR-318</scope>
    <scope>IDENTIFICATION BY MASS SPECTROMETRY [LARGE SCALE ANALYSIS]</scope>
    <source>
        <tissue>Brain</tissue>
    </source>
</reference>
<reference key="12">
    <citation type="journal article" date="2010" name="Cell">
        <title>A tissue-specific atlas of mouse protein phosphorylation and expression.</title>
        <authorList>
            <person name="Huttlin E.L."/>
            <person name="Jedrychowski M.P."/>
            <person name="Elias J.E."/>
            <person name="Goswami T."/>
            <person name="Rad R."/>
            <person name="Beausoleil S.A."/>
            <person name="Villen J."/>
            <person name="Haas W."/>
            <person name="Sowa M.E."/>
            <person name="Gygi S.P."/>
        </authorList>
    </citation>
    <scope>PHOSPHORYLATION [LARGE SCALE ANALYSIS] AT SER-97; SER-224; SER-550; SER-551; THR-565; SER-605; SER-610; SER-715; SER-723 AND SER-769</scope>
    <scope>IDENTIFICATION BY MASS SPECTROMETRY [LARGE SCALE ANALYSIS]</scope>
    <source>
        <tissue>Brain</tissue>
        <tissue>Lung</tissue>
    </source>
</reference>
<reference key="13">
    <citation type="journal article" date="2012" name="J. Neurosci.">
        <title>Peripherin is a subunit of peripheral nerve neurofilaments: implications for differential vulnerability of CNS and peripheral nervous system axons.</title>
        <authorList>
            <person name="Yuan A."/>
            <person name="Sasaki T."/>
            <person name="Kumar A."/>
            <person name="Peterhoff C.M."/>
            <person name="Rao M.V."/>
            <person name="Liem R.K."/>
            <person name="Julien J.P."/>
            <person name="Nixon R.A."/>
        </authorList>
    </citation>
    <scope>FUNCTION</scope>
    <scope>SUBCELLULAR LOCATION</scope>
    <scope>TISSUE SPECIFICITY</scope>
</reference>
<reference key="14">
    <citation type="journal article" date="2014" name="Mol. Cell. Proteomics">
        <title>Immunoaffinity enrichment and mass spectrometry analysis of protein methylation.</title>
        <authorList>
            <person name="Guo A."/>
            <person name="Gu H."/>
            <person name="Zhou J."/>
            <person name="Mulhern D."/>
            <person name="Wang Y."/>
            <person name="Lee K.A."/>
            <person name="Yang V."/>
            <person name="Aguiar M."/>
            <person name="Kornhauser J."/>
            <person name="Jia X."/>
            <person name="Ren J."/>
            <person name="Beausoleil S.A."/>
            <person name="Silva J.C."/>
            <person name="Vemulapalli V."/>
            <person name="Bedford M.T."/>
            <person name="Comb M.J."/>
        </authorList>
    </citation>
    <scope>METHYLATION [LARGE SCALE ANALYSIS] AT ARG-42</scope>
    <scope>IDENTIFICATION BY MASS SPECTROMETRY [LARGE SCALE ANALYSIS]</scope>
    <source>
        <tissue>Brain</tissue>
        <tissue>Embryo</tissue>
    </source>
</reference>
<keyword id="KW-0007">Acetylation</keyword>
<keyword id="KW-0966">Cell projection</keyword>
<keyword id="KW-0175">Coiled coil</keyword>
<keyword id="KW-0963">Cytoplasm</keyword>
<keyword id="KW-0206">Cytoskeleton</keyword>
<keyword id="KW-0903">Direct protein sequencing</keyword>
<keyword id="KW-0325">Glycoprotein</keyword>
<keyword id="KW-0403">Intermediate filament</keyword>
<keyword id="KW-0488">Methylation</keyword>
<keyword id="KW-0597">Phosphoprotein</keyword>
<keyword id="KW-1185">Reference proteome</keyword>
<name>NFM_MOUSE</name>
<gene>
    <name type="primary">Nefm</name>
    <name type="synonym">Nef3</name>
    <name type="synonym">Nfm</name>
</gene>
<evidence type="ECO:0000250" key="1"/>
<evidence type="ECO:0000250" key="2">
    <source>
        <dbReference type="UniProtKB" id="O77788"/>
    </source>
</evidence>
<evidence type="ECO:0000250" key="3">
    <source>
        <dbReference type="UniProtKB" id="P12839"/>
    </source>
</evidence>
<evidence type="ECO:0000255" key="4">
    <source>
        <dbReference type="PROSITE-ProRule" id="PRU01188"/>
    </source>
</evidence>
<evidence type="ECO:0000256" key="5">
    <source>
        <dbReference type="SAM" id="MobiDB-lite"/>
    </source>
</evidence>
<evidence type="ECO:0000269" key="6">
    <source>
    </source>
</evidence>
<evidence type="ECO:0000305" key="7"/>
<evidence type="ECO:0000305" key="8">
    <source>
    </source>
</evidence>
<evidence type="ECO:0007744" key="9">
    <source>
    </source>
</evidence>
<evidence type="ECO:0007744" key="10">
    <source>
    </source>
</evidence>
<evidence type="ECO:0007744" key="11">
    <source>
    </source>
</evidence>
<evidence type="ECO:0007744" key="12">
    <source>
    </source>
</evidence>
<evidence type="ECO:0007744" key="13">
    <source>
    </source>
</evidence>
<organism>
    <name type="scientific">Mus musculus</name>
    <name type="common">Mouse</name>
    <dbReference type="NCBI Taxonomy" id="10090"/>
    <lineage>
        <taxon>Eukaryota</taxon>
        <taxon>Metazoa</taxon>
        <taxon>Chordata</taxon>
        <taxon>Craniata</taxon>
        <taxon>Vertebrata</taxon>
        <taxon>Euteleostomi</taxon>
        <taxon>Mammalia</taxon>
        <taxon>Eutheria</taxon>
        <taxon>Euarchontoglires</taxon>
        <taxon>Glires</taxon>
        <taxon>Rodentia</taxon>
        <taxon>Myomorpha</taxon>
        <taxon>Muroidea</taxon>
        <taxon>Muridae</taxon>
        <taxon>Murinae</taxon>
        <taxon>Mus</taxon>
        <taxon>Mus</taxon>
    </lineage>
</organism>
<proteinExistence type="evidence at protein level"/>
<sequence>MSYTLDSLGNPSAYRRVTETRSSFSRVSGSPSSGFRSQSWSRGSPSTVSSSYKRSALAPRLAYSSAMLSSAESSLDFSQSSSLLNGGSGGDYKLSRSNEKEQLQGLNDRFAGYIEKVHYLEQQNKEIEAEIQALRQKQASHAQLGDAYDQEIRELRATLEMVNHEKAQVQLDSDHLEEDIHRLKERFEEEARLRDDTEAAIRALRKDIEESSMVKVELDKKVQSLQDEVAFLRSNHEEEVADLLAQIQASHITVERKDYLKTDISTALKEIRSQLECHSDQNMHQAEEWFKCRYAKLTEAAEQNKEAIRSAKEEIAEYRRQLQSKSIELESVRGTKESLERQLSDIEERHNHDLSSYQDTIQQLENELRGTKWEMARHLREYQDLLNVKMALDIEIAAYRKLLEGEETRFSTFSGSITGPLYTHRQPSVTISSKIQKTKVEAPKLKVQHKFVEEIIEETKVEDEKSEMEETLTAIAEELAASAKEEKEEAEEKEEEPEAEKSPVKSPEAKEEEEEGEKEEEEEGQEEEEEEDEGVKSDQAEEGGSEKEGSSEKDEGEQEEEEGETEAEGEGEEAEAKEEKKIEGKVEEVAVKEEIKVEKPEKAKSPMPKSPVEEVKPKPEAKAGKGEQKEEEKVEEEKKEVTKESPKEEKVEKKEEKPKDVADKKKAESPVKEKAVEEVITISKSVKVSLEKDTKEEKPQPQEKVKEKAEEEGGSEEEGSDRSPQESKKEDIAINGEVEGKEEEEQETQEKGSGREEEKGVVTNGLDVSPAEEKKGEDSSDDKVVVTKKVEKITSEGGDGATKYITKSVTVTQKVEEHEETFEEKLVSTKKVEKVTSHAIVKEVTQGD</sequence>